<name>HEPA_EHV1V</name>
<organismHost>
    <name type="scientific">Equus caballus</name>
    <name type="common">Horse</name>
    <dbReference type="NCBI Taxonomy" id="9796"/>
</organismHost>
<evidence type="ECO:0000255" key="1">
    <source>
        <dbReference type="HAMAP-Rule" id="MF_04010"/>
    </source>
</evidence>
<evidence type="ECO:0000305" key="2"/>
<organism>
    <name type="scientific">Equine herpesvirus 1 (strain V592)</name>
    <name type="common">EHV-1</name>
    <name type="synonym">Equine abortion virus</name>
    <dbReference type="NCBI Taxonomy" id="310273"/>
    <lineage>
        <taxon>Viruses</taxon>
        <taxon>Duplodnaviria</taxon>
        <taxon>Heunggongvirae</taxon>
        <taxon>Peploviricota</taxon>
        <taxon>Herviviricetes</taxon>
        <taxon>Herpesvirales</taxon>
        <taxon>Orthoherpesviridae</taxon>
        <taxon>Alphaherpesvirinae</taxon>
        <taxon>Varicellovirus</taxon>
        <taxon>Varicellovirus equidalpha1</taxon>
        <taxon>Equid alphaherpesvirus 1</taxon>
    </lineage>
</organism>
<feature type="chain" id="PRO_0000115860" description="DNA helicase/primase complex-associated protein">
    <location>
        <begin position="1"/>
        <end position="716"/>
    </location>
</feature>
<accession>Q6S6V0</accession>
<sequence>MLCRRGSDYTAEFCHVPVSGELLKRGARDASLVTPARVASAAQTAAVPGCWPLAPLGNAMLWKSVYGGITAALKRAVGSFAFYQPLVLGINTQTGLLVTLRPAASAGEGGGDHVSPRAAIVNVSVEVDLDPAGIEASAASSTGSSLARARLCTLRDGYFLSKRDIALEVEIATKEVSFYRKYDSVQQPANKRRGDMADLFVVHERTLLLGGCKRMGVKVLLPRTFDCLVASSQSVSGLAAMALYKQWHATLFSVELPDTVVQIFAYLGPELNPCGEEVDYCCFVGFPGLPTLKASSSTTEAVRDAMAAYRLSDGLWPALGMSAFHFLAPWDPEDRWPGESEAKRVEGAVHRLQLGTEDDWGAGRVSCILESDAVMQGPWFAKFDFSAFFPTLYLLLFPANERLAEVVRLRARGQHPTLKLALVSFFGGLQHINPVAYRSIIALSNGISKRLEHEVNQRGFAICTYVKDGFWGAAGNLPSDSVSYADALVYAEELRSAAQKAALGHVSEMGFSLPEGVHLNLRLEGLFTDAISWSTHCYWLYNRFTKMEDFVGFPAKSGAGRAAKASLSALLPLVAAVCDSSDMSTLHQSVRGACEQLVAGAFAERNNPQFWSTRTGIESSTLLPPAVYRNGSLLDRDCGQREIVLTRKHDCESPSPVPWTLFPPPLVLGRIDCMVYLTSIFKTYLSMLNRAISASCDADESMNVDFPISDYAFLFT</sequence>
<comment type="function">
    <text evidence="1">Component of the helicase/primase complex. Unwinds the DNA at the replication forks and generates single-stranded DNA for both leading and lagging strand synthesis. The primase synthesizes short RNA primers on the lagging strand that the polymerase presumably elongates using dNTPs. The primase-associated factor has no known catalytic activity in the complex and may serve to facilitate the formation of the replisome by directly interacting with the origin-binding protein and the polymerase.</text>
</comment>
<comment type="subunit">
    <text evidence="1">Associates with the primase and the helicase to form the helicase-primase complex. Interacts with the origin-binding protein. Interacts with the polymerase catalytic subunit.</text>
</comment>
<comment type="subcellular location">
    <subcellularLocation>
        <location evidence="1">Host nucleus</location>
    </subcellularLocation>
</comment>
<comment type="similarity">
    <text evidence="1">Belongs to the herpesviridae HEPA family.</text>
</comment>
<comment type="sequence caution" evidence="2">
    <conflict type="erroneous initiation">
        <sequence resource="EMBL-CDS" id="AAS45938"/>
    </conflict>
</comment>
<reference key="1">
    <citation type="submission" date="2003-11" db="EMBL/GenBank/DDBJ databases">
        <authorList>
            <person name="Davis-Poynter N."/>
            <person name="Nugent J."/>
            <person name="Birch-Machin I."/>
            <person name="Allen G.P."/>
        </authorList>
    </citation>
    <scope>NUCLEOTIDE SEQUENCE [LARGE SCALE GENOMIC DNA]</scope>
</reference>
<dbReference type="EMBL" id="AY464052">
    <property type="protein sequence ID" value="AAS45938.1"/>
    <property type="status" value="ALT_INIT"/>
    <property type="molecule type" value="Genomic_DNA"/>
</dbReference>
<dbReference type="KEGG" id="vg:2948558"/>
<dbReference type="Proteomes" id="UP000008296">
    <property type="component" value="Segment"/>
</dbReference>
<dbReference type="GO" id="GO:0042025">
    <property type="term" value="C:host cell nucleus"/>
    <property type="evidence" value="ECO:0007669"/>
    <property type="project" value="UniProtKB-SubCell"/>
</dbReference>
<dbReference type="GO" id="GO:0016740">
    <property type="term" value="F:transferase activity"/>
    <property type="evidence" value="ECO:0007669"/>
    <property type="project" value="UniProtKB-KW"/>
</dbReference>
<dbReference type="GO" id="GO:0006260">
    <property type="term" value="P:DNA replication"/>
    <property type="evidence" value="ECO:0007669"/>
    <property type="project" value="UniProtKB-KW"/>
</dbReference>
<dbReference type="GO" id="GO:0019079">
    <property type="term" value="P:viral genome replication"/>
    <property type="evidence" value="ECO:0007669"/>
    <property type="project" value="InterPro"/>
</dbReference>
<dbReference type="HAMAP" id="MF_04010">
    <property type="entry name" value="HSV_HEPA"/>
    <property type="match status" value="1"/>
</dbReference>
<dbReference type="InterPro" id="IPR004996">
    <property type="entry name" value="HSV_HEPA"/>
</dbReference>
<dbReference type="Pfam" id="PF03324">
    <property type="entry name" value="Herpes_HEPA"/>
    <property type="match status" value="1"/>
</dbReference>
<gene>
    <name type="ordered locus">54</name>
</gene>
<protein>
    <recommendedName>
        <fullName evidence="1">DNA helicase/primase complex-associated protein</fullName>
        <shortName evidence="1">HEPA</shortName>
    </recommendedName>
    <alternativeName>
        <fullName evidence="1">Primase-associated factor</fullName>
    </alternativeName>
</protein>
<keyword id="KW-0235">DNA replication</keyword>
<keyword id="KW-1048">Host nucleus</keyword>
<keyword id="KW-0808">Transferase</keyword>
<proteinExistence type="inferred from homology"/>